<name>RRAAH_MYCLE</name>
<reference key="1">
    <citation type="journal article" date="2001" name="Nature">
        <title>Massive gene decay in the leprosy bacillus.</title>
        <authorList>
            <person name="Cole S.T."/>
            <person name="Eiglmeier K."/>
            <person name="Parkhill J."/>
            <person name="James K.D."/>
            <person name="Thomson N.R."/>
            <person name="Wheeler P.R."/>
            <person name="Honore N."/>
            <person name="Garnier T."/>
            <person name="Churcher C.M."/>
            <person name="Harris D.E."/>
            <person name="Mungall K.L."/>
            <person name="Basham D."/>
            <person name="Brown D."/>
            <person name="Chillingworth T."/>
            <person name="Connor R."/>
            <person name="Davies R.M."/>
            <person name="Devlin K."/>
            <person name="Duthoy S."/>
            <person name="Feltwell T."/>
            <person name="Fraser A."/>
            <person name="Hamlin N."/>
            <person name="Holroyd S."/>
            <person name="Hornsby T."/>
            <person name="Jagels K."/>
            <person name="Lacroix C."/>
            <person name="Maclean J."/>
            <person name="Moule S."/>
            <person name="Murphy L.D."/>
            <person name="Oliver K."/>
            <person name="Quail M.A."/>
            <person name="Rajandream M.A."/>
            <person name="Rutherford K.M."/>
            <person name="Rutter S."/>
            <person name="Seeger K."/>
            <person name="Simon S."/>
            <person name="Simmonds M."/>
            <person name="Skelton J."/>
            <person name="Squares R."/>
            <person name="Squares S."/>
            <person name="Stevens K."/>
            <person name="Taylor K."/>
            <person name="Whitehead S."/>
            <person name="Woodward J.R."/>
            <person name="Barrell B.G."/>
        </authorList>
    </citation>
    <scope>NUCLEOTIDE SEQUENCE [LARGE SCALE GENOMIC DNA]</scope>
    <source>
        <strain>TN</strain>
    </source>
</reference>
<sequence length="157" mass="16193">MIVSFRPTADLVDSIGVDVRSCDLQFRQFGGCSEFAGPISTVRCFQDNALLKSVLSQTSAGGVLVVDGAGSLHTALVGDVIAELAHSNGWAGLIVNGAVRDAAALRGIDIGIKALGTNPRKSTKIGTGERHVEVNLGGVTFVPGEVVYSDDDGIVVV</sequence>
<comment type="function">
    <text evidence="1">Catalyzes the aldol cleavage of 4-hydroxy-4-methyl-2-oxoglutarate (HMG) into 2 molecules of pyruvate. Also contains a secondary oxaloacetate (OAA) decarboxylase activity due to the common pyruvate enolate transition state formed following C-C bond cleavage in the retro-aldol and decarboxylation reactions (By similarity).</text>
</comment>
<comment type="catalytic activity">
    <reaction>
        <text>4-hydroxy-4-methyl-2-oxoglutarate = 2 pyruvate</text>
        <dbReference type="Rhea" id="RHEA:22748"/>
        <dbReference type="ChEBI" id="CHEBI:15361"/>
        <dbReference type="ChEBI" id="CHEBI:58276"/>
        <dbReference type="EC" id="4.1.3.17"/>
    </reaction>
</comment>
<comment type="catalytic activity">
    <reaction>
        <text>oxaloacetate + H(+) = pyruvate + CO2</text>
        <dbReference type="Rhea" id="RHEA:15641"/>
        <dbReference type="ChEBI" id="CHEBI:15361"/>
        <dbReference type="ChEBI" id="CHEBI:15378"/>
        <dbReference type="ChEBI" id="CHEBI:16452"/>
        <dbReference type="ChEBI" id="CHEBI:16526"/>
        <dbReference type="EC" id="4.1.1.112"/>
    </reaction>
</comment>
<comment type="cofactor">
    <cofactor evidence="1">
        <name>a divalent metal cation</name>
        <dbReference type="ChEBI" id="CHEBI:60240"/>
    </cofactor>
    <text evidence="1">Divalent metal cation.</text>
</comment>
<comment type="subunit">
    <text evidence="1">Homotrimer.</text>
</comment>
<comment type="similarity">
    <text evidence="2">Belongs to the class II aldolase/RraA-like family.</text>
</comment>
<evidence type="ECO:0000250" key="1"/>
<evidence type="ECO:0000305" key="2"/>
<accession>Q9CDD2</accession>
<keyword id="KW-0456">Lyase</keyword>
<keyword id="KW-0479">Metal-binding</keyword>
<keyword id="KW-1185">Reference proteome</keyword>
<gene>
    <name type="ordered locus">ML0066</name>
</gene>
<dbReference type="EC" id="4.1.3.17"/>
<dbReference type="EC" id="4.1.1.112"/>
<dbReference type="EMBL" id="AL583917">
    <property type="protein sequence ID" value="CAC29574.1"/>
    <property type="molecule type" value="Genomic_DNA"/>
</dbReference>
<dbReference type="PIR" id="B86917">
    <property type="entry name" value="B86917"/>
</dbReference>
<dbReference type="RefSeq" id="NP_301174.1">
    <property type="nucleotide sequence ID" value="NC_002677.1"/>
</dbReference>
<dbReference type="SMR" id="Q9CDD2"/>
<dbReference type="STRING" id="272631.gene:17573878"/>
<dbReference type="KEGG" id="mle:ML0066"/>
<dbReference type="PATRIC" id="fig|272631.5.peg.104"/>
<dbReference type="Leproma" id="ML0066"/>
<dbReference type="eggNOG" id="COG0684">
    <property type="taxonomic scope" value="Bacteria"/>
</dbReference>
<dbReference type="HOGENOM" id="CLU_072626_4_0_11"/>
<dbReference type="OrthoDB" id="943692at2"/>
<dbReference type="Proteomes" id="UP000000806">
    <property type="component" value="Chromosome"/>
</dbReference>
<dbReference type="GO" id="GO:0047443">
    <property type="term" value="F:4-hydroxy-4-methyl-2-oxoglutarate aldolase activity"/>
    <property type="evidence" value="ECO:0007669"/>
    <property type="project" value="UniProtKB-EC"/>
</dbReference>
<dbReference type="GO" id="GO:0046872">
    <property type="term" value="F:metal ion binding"/>
    <property type="evidence" value="ECO:0007669"/>
    <property type="project" value="UniProtKB-KW"/>
</dbReference>
<dbReference type="GO" id="GO:0008948">
    <property type="term" value="F:oxaloacetate decarboxylase activity"/>
    <property type="evidence" value="ECO:0007669"/>
    <property type="project" value="UniProtKB-EC"/>
</dbReference>
<dbReference type="GO" id="GO:0008428">
    <property type="term" value="F:ribonuclease inhibitor activity"/>
    <property type="evidence" value="ECO:0007669"/>
    <property type="project" value="InterPro"/>
</dbReference>
<dbReference type="GO" id="GO:0051252">
    <property type="term" value="P:regulation of RNA metabolic process"/>
    <property type="evidence" value="ECO:0007669"/>
    <property type="project" value="InterPro"/>
</dbReference>
<dbReference type="CDD" id="cd16841">
    <property type="entry name" value="RraA_family"/>
    <property type="match status" value="1"/>
</dbReference>
<dbReference type="Gene3D" id="3.50.30.40">
    <property type="entry name" value="Ribonuclease E inhibitor RraA/RraA-like"/>
    <property type="match status" value="1"/>
</dbReference>
<dbReference type="InterPro" id="IPR010203">
    <property type="entry name" value="RraA"/>
</dbReference>
<dbReference type="InterPro" id="IPR005493">
    <property type="entry name" value="RraA/RraA-like"/>
</dbReference>
<dbReference type="InterPro" id="IPR036704">
    <property type="entry name" value="RraA/RraA-like_sf"/>
</dbReference>
<dbReference type="NCBIfam" id="TIGR01935">
    <property type="entry name" value="NOT-MenG"/>
    <property type="match status" value="1"/>
</dbReference>
<dbReference type="NCBIfam" id="NF006875">
    <property type="entry name" value="PRK09372.1"/>
    <property type="match status" value="1"/>
</dbReference>
<dbReference type="PANTHER" id="PTHR33254">
    <property type="entry name" value="4-HYDROXY-4-METHYL-2-OXOGLUTARATE ALDOLASE 3-RELATED"/>
    <property type="match status" value="1"/>
</dbReference>
<dbReference type="PANTHER" id="PTHR33254:SF4">
    <property type="entry name" value="4-HYDROXY-4-METHYL-2-OXOGLUTARATE ALDOLASE 3-RELATED"/>
    <property type="match status" value="1"/>
</dbReference>
<dbReference type="Pfam" id="PF03737">
    <property type="entry name" value="RraA-like"/>
    <property type="match status" value="1"/>
</dbReference>
<dbReference type="SUPFAM" id="SSF89562">
    <property type="entry name" value="RraA-like"/>
    <property type="match status" value="1"/>
</dbReference>
<organism>
    <name type="scientific">Mycobacterium leprae (strain TN)</name>
    <dbReference type="NCBI Taxonomy" id="272631"/>
    <lineage>
        <taxon>Bacteria</taxon>
        <taxon>Bacillati</taxon>
        <taxon>Actinomycetota</taxon>
        <taxon>Actinomycetes</taxon>
        <taxon>Mycobacteriales</taxon>
        <taxon>Mycobacteriaceae</taxon>
        <taxon>Mycobacterium</taxon>
    </lineage>
</organism>
<protein>
    <recommendedName>
        <fullName>Putative 4-hydroxy-4-methyl-2-oxoglutarate aldolase</fullName>
        <shortName>HMG aldolase</shortName>
        <ecNumber>4.1.3.17</ecNumber>
    </recommendedName>
    <alternativeName>
        <fullName>Oxaloacetate decarboxylase</fullName>
        <shortName>OAA decarboxylase</shortName>
        <ecNumber>4.1.1.112</ecNumber>
    </alternativeName>
    <alternativeName>
        <fullName>Regulator of ribonuclease activity homolog</fullName>
    </alternativeName>
    <alternativeName>
        <fullName>RraA-like protein</fullName>
    </alternativeName>
</protein>
<proteinExistence type="inferred from homology"/>
<feature type="chain" id="PRO_0000209621" description="Putative 4-hydroxy-4-methyl-2-oxoglutarate aldolase">
    <location>
        <begin position="1"/>
        <end position="157"/>
    </location>
</feature>
<feature type="binding site" evidence="1">
    <location>
        <begin position="78"/>
        <end position="81"/>
    </location>
    <ligand>
        <name>substrate</name>
    </ligand>
</feature>
<feature type="binding site" evidence="1">
    <location>
        <position position="100"/>
    </location>
    <ligand>
        <name>substrate</name>
    </ligand>
</feature>
<feature type="binding site" evidence="1">
    <location>
        <position position="101"/>
    </location>
    <ligand>
        <name>a divalent metal cation</name>
        <dbReference type="ChEBI" id="CHEBI:60240"/>
    </ligand>
</feature>